<protein>
    <recommendedName>
        <fullName evidence="2">Small ribosomal subunit protein uS17</fullName>
    </recommendedName>
    <alternativeName>
        <fullName evidence="3">30S ribosomal protein S17</fullName>
    </alternativeName>
</protein>
<feature type="initiator methionine" description="Removed" evidence="1">
    <location>
        <position position="1"/>
    </location>
</feature>
<feature type="chain" id="PRO_0000128491" description="Small ribosomal subunit protein uS17">
    <location>
        <begin position="2"/>
        <end position="105"/>
    </location>
</feature>
<feature type="strand" evidence="4">
    <location>
        <begin position="5"/>
        <end position="12"/>
    </location>
</feature>
<feature type="strand" evidence="4">
    <location>
        <begin position="18"/>
        <end position="26"/>
    </location>
</feature>
<feature type="turn" evidence="4">
    <location>
        <begin position="30"/>
        <end position="32"/>
    </location>
</feature>
<feature type="strand" evidence="4">
    <location>
        <begin position="37"/>
        <end position="45"/>
    </location>
</feature>
<feature type="strand" evidence="4">
    <location>
        <begin position="56"/>
        <end position="61"/>
    </location>
</feature>
<feature type="strand" evidence="4">
    <location>
        <begin position="66"/>
        <end position="68"/>
    </location>
</feature>
<feature type="strand" evidence="4">
    <location>
        <begin position="71"/>
        <end position="79"/>
    </location>
</feature>
<feature type="helix" evidence="4">
    <location>
        <begin position="82"/>
        <end position="95"/>
    </location>
</feature>
<feature type="turn" evidence="4">
    <location>
        <begin position="96"/>
        <end position="98"/>
    </location>
</feature>
<evidence type="ECO:0000250" key="1"/>
<evidence type="ECO:0000255" key="2">
    <source>
        <dbReference type="HAMAP-Rule" id="MF_01345"/>
    </source>
</evidence>
<evidence type="ECO:0000305" key="3"/>
<evidence type="ECO:0007829" key="4">
    <source>
        <dbReference type="PDB" id="4V67"/>
    </source>
</evidence>
<proteinExistence type="evidence at protein level"/>
<accession>P62658</accession>
<keyword id="KW-0002">3D-structure</keyword>
<keyword id="KW-0687">Ribonucleoprotein</keyword>
<keyword id="KW-0689">Ribosomal protein</keyword>
<keyword id="KW-0694">RNA-binding</keyword>
<keyword id="KW-0699">rRNA-binding</keyword>
<organism>
    <name type="scientific">Thermus thermophilus (strain ATCC BAA-163 / DSM 7039 / HB27)</name>
    <dbReference type="NCBI Taxonomy" id="262724"/>
    <lineage>
        <taxon>Bacteria</taxon>
        <taxon>Thermotogati</taxon>
        <taxon>Deinococcota</taxon>
        <taxon>Deinococci</taxon>
        <taxon>Thermales</taxon>
        <taxon>Thermaceae</taxon>
        <taxon>Thermus</taxon>
    </lineage>
</organism>
<dbReference type="EMBL" id="AE017221">
    <property type="protein sequence ID" value="AAS81661.1"/>
    <property type="molecule type" value="Genomic_DNA"/>
</dbReference>
<dbReference type="RefSeq" id="WP_011173708.1">
    <property type="nucleotide sequence ID" value="NC_005835.1"/>
</dbReference>
<dbReference type="PDB" id="4V4I">
    <property type="method" value="X-ray"/>
    <property type="resolution" value="3.71 A"/>
    <property type="chains" value="r=1-105"/>
</dbReference>
<dbReference type="PDB" id="4V4J">
    <property type="method" value="X-ray"/>
    <property type="resolution" value="3.83 A"/>
    <property type="chains" value="r=1-105"/>
</dbReference>
<dbReference type="PDB" id="4V63">
    <property type="method" value="X-ray"/>
    <property type="resolution" value="3.21 A"/>
    <property type="chains" value="AQ/CQ=1-105"/>
</dbReference>
<dbReference type="PDB" id="4V67">
    <property type="method" value="X-ray"/>
    <property type="resolution" value="3.00 A"/>
    <property type="chains" value="AQ/CQ=1-105"/>
</dbReference>
<dbReference type="PDB" id="4V7P">
    <property type="method" value="X-ray"/>
    <property type="resolution" value="3.62 A"/>
    <property type="chains" value="AQ/DQ=2-100"/>
</dbReference>
<dbReference type="PDB" id="4V83">
    <property type="method" value="X-ray"/>
    <property type="resolution" value="3.50 A"/>
    <property type="chains" value="AQ/CQ=2-100"/>
</dbReference>
<dbReference type="PDB" id="4V84">
    <property type="method" value="X-ray"/>
    <property type="resolution" value="3.40 A"/>
    <property type="chains" value="AQ/CQ=2-100"/>
</dbReference>
<dbReference type="PDB" id="4V9J">
    <property type="method" value="X-ray"/>
    <property type="resolution" value="3.86 A"/>
    <property type="chains" value="AQ/CQ=2-101"/>
</dbReference>
<dbReference type="PDB" id="4V9K">
    <property type="method" value="X-ray"/>
    <property type="resolution" value="3.50 A"/>
    <property type="chains" value="AQ/CQ=2-101"/>
</dbReference>
<dbReference type="PDB" id="4V9L">
    <property type="method" value="X-ray"/>
    <property type="resolution" value="3.50 A"/>
    <property type="chains" value="AQ/CQ=2-101"/>
</dbReference>
<dbReference type="PDB" id="4V9M">
    <property type="method" value="X-ray"/>
    <property type="resolution" value="4.00 A"/>
    <property type="chains" value="AQ/CQ=2-101"/>
</dbReference>
<dbReference type="PDB" id="4V9N">
    <property type="method" value="X-ray"/>
    <property type="resolution" value="3.40 A"/>
    <property type="chains" value="AQ/CQ=2-100"/>
</dbReference>
<dbReference type="PDB" id="4V9Q">
    <property type="method" value="X-ray"/>
    <property type="resolution" value="3.40 A"/>
    <property type="chains" value="BQ/DQ=2-100"/>
</dbReference>
<dbReference type="PDB" id="4W29">
    <property type="method" value="X-ray"/>
    <property type="resolution" value="3.80 A"/>
    <property type="chains" value="AQ/CQ=2-101"/>
</dbReference>
<dbReference type="PDB" id="4XEJ">
    <property type="method" value="X-ray"/>
    <property type="resolution" value="3.80 A"/>
    <property type="chains" value="AS17/BS17=2-100"/>
</dbReference>
<dbReference type="PDB" id="5J4D">
    <property type="method" value="X-ray"/>
    <property type="resolution" value="3.10 A"/>
    <property type="chains" value="ED/ZA=1-105"/>
</dbReference>
<dbReference type="PDB" id="6B4V">
    <property type="method" value="X-ray"/>
    <property type="resolution" value="3.40 A"/>
    <property type="chains" value="DD/ZA=1-105"/>
</dbReference>
<dbReference type="PDB" id="6BOH">
    <property type="method" value="X-ray"/>
    <property type="resolution" value="3.40 A"/>
    <property type="chains" value="AB/FD=1-105"/>
</dbReference>
<dbReference type="PDB" id="6BOK">
    <property type="method" value="X-ray"/>
    <property type="resolution" value="3.55 A"/>
    <property type="chains" value="BD/YA=1-105"/>
</dbReference>
<dbReference type="PDB" id="6N1D">
    <property type="method" value="X-ray"/>
    <property type="resolution" value="3.20 A"/>
    <property type="chains" value="AS17/BS17=2-105"/>
</dbReference>
<dbReference type="PDBsum" id="4V4I"/>
<dbReference type="PDBsum" id="4V4J"/>
<dbReference type="PDBsum" id="4V63"/>
<dbReference type="PDBsum" id="4V67"/>
<dbReference type="PDBsum" id="4V7P"/>
<dbReference type="PDBsum" id="4V83"/>
<dbReference type="PDBsum" id="4V84"/>
<dbReference type="PDBsum" id="4V9J"/>
<dbReference type="PDBsum" id="4V9K"/>
<dbReference type="PDBsum" id="4V9L"/>
<dbReference type="PDBsum" id="4V9M"/>
<dbReference type="PDBsum" id="4V9N"/>
<dbReference type="PDBsum" id="4V9Q"/>
<dbReference type="PDBsum" id="4W29"/>
<dbReference type="PDBsum" id="4XEJ"/>
<dbReference type="PDBsum" id="5J4D"/>
<dbReference type="PDBsum" id="6B4V"/>
<dbReference type="PDBsum" id="6BOH"/>
<dbReference type="PDBsum" id="6BOK"/>
<dbReference type="PDBsum" id="6N1D"/>
<dbReference type="SMR" id="P62658"/>
<dbReference type="IntAct" id="P62658">
    <property type="interactions" value="4"/>
</dbReference>
<dbReference type="DrugBank" id="DB08185">
    <property type="generic name" value="2-METHYLTHIO-N6-ISOPENTENYL-ADENOSINE-5'-MONOPHOSPHATE"/>
</dbReference>
<dbReference type="KEGG" id="tth:TT_C1319"/>
<dbReference type="eggNOG" id="COG0186">
    <property type="taxonomic scope" value="Bacteria"/>
</dbReference>
<dbReference type="HOGENOM" id="CLU_073626_1_1_0"/>
<dbReference type="OrthoDB" id="9811714at2"/>
<dbReference type="Proteomes" id="UP000000592">
    <property type="component" value="Chromosome"/>
</dbReference>
<dbReference type="GO" id="GO:0022627">
    <property type="term" value="C:cytosolic small ribosomal subunit"/>
    <property type="evidence" value="ECO:0007669"/>
    <property type="project" value="TreeGrafter"/>
</dbReference>
<dbReference type="GO" id="GO:0019843">
    <property type="term" value="F:rRNA binding"/>
    <property type="evidence" value="ECO:0007669"/>
    <property type="project" value="UniProtKB-UniRule"/>
</dbReference>
<dbReference type="GO" id="GO:0003735">
    <property type="term" value="F:structural constituent of ribosome"/>
    <property type="evidence" value="ECO:0007669"/>
    <property type="project" value="InterPro"/>
</dbReference>
<dbReference type="GO" id="GO:0006412">
    <property type="term" value="P:translation"/>
    <property type="evidence" value="ECO:0007669"/>
    <property type="project" value="UniProtKB-UniRule"/>
</dbReference>
<dbReference type="CDD" id="cd00364">
    <property type="entry name" value="Ribosomal_uS17"/>
    <property type="match status" value="1"/>
</dbReference>
<dbReference type="Gene3D" id="2.40.50.140">
    <property type="entry name" value="Nucleic acid-binding proteins"/>
    <property type="match status" value="1"/>
</dbReference>
<dbReference type="HAMAP" id="MF_01345_B">
    <property type="entry name" value="Ribosomal_uS17_B"/>
    <property type="match status" value="1"/>
</dbReference>
<dbReference type="InterPro" id="IPR012340">
    <property type="entry name" value="NA-bd_OB-fold"/>
</dbReference>
<dbReference type="InterPro" id="IPR000266">
    <property type="entry name" value="Ribosomal_uS17"/>
</dbReference>
<dbReference type="InterPro" id="IPR019984">
    <property type="entry name" value="Ribosomal_uS17_bact/chlr"/>
</dbReference>
<dbReference type="InterPro" id="IPR019979">
    <property type="entry name" value="Ribosomal_uS17_CS"/>
</dbReference>
<dbReference type="NCBIfam" id="NF004123">
    <property type="entry name" value="PRK05610.1"/>
    <property type="match status" value="1"/>
</dbReference>
<dbReference type="NCBIfam" id="TIGR03635">
    <property type="entry name" value="uS17_bact"/>
    <property type="match status" value="1"/>
</dbReference>
<dbReference type="PANTHER" id="PTHR10744">
    <property type="entry name" value="40S RIBOSOMAL PROTEIN S11 FAMILY MEMBER"/>
    <property type="match status" value="1"/>
</dbReference>
<dbReference type="PANTHER" id="PTHR10744:SF1">
    <property type="entry name" value="SMALL RIBOSOMAL SUBUNIT PROTEIN US17M"/>
    <property type="match status" value="1"/>
</dbReference>
<dbReference type="Pfam" id="PF00366">
    <property type="entry name" value="Ribosomal_S17"/>
    <property type="match status" value="1"/>
</dbReference>
<dbReference type="PRINTS" id="PR00973">
    <property type="entry name" value="RIBOSOMALS17"/>
</dbReference>
<dbReference type="SUPFAM" id="SSF50249">
    <property type="entry name" value="Nucleic acid-binding proteins"/>
    <property type="match status" value="1"/>
</dbReference>
<dbReference type="PROSITE" id="PS00056">
    <property type="entry name" value="RIBOSOMAL_S17"/>
    <property type="match status" value="1"/>
</dbReference>
<reference key="1">
    <citation type="journal article" date="2004" name="Nat. Biotechnol.">
        <title>The genome sequence of the extreme thermophile Thermus thermophilus.</title>
        <authorList>
            <person name="Henne A."/>
            <person name="Brueggemann H."/>
            <person name="Raasch C."/>
            <person name="Wiezer A."/>
            <person name="Hartsch T."/>
            <person name="Liesegang H."/>
            <person name="Johann A."/>
            <person name="Lienard T."/>
            <person name="Gohl O."/>
            <person name="Martinez-Arias R."/>
            <person name="Jacobi C."/>
            <person name="Starkuviene V."/>
            <person name="Schlenczeck S."/>
            <person name="Dencker S."/>
            <person name="Huber R."/>
            <person name="Klenk H.-P."/>
            <person name="Kramer W."/>
            <person name="Merkl R."/>
            <person name="Gottschalk G."/>
            <person name="Fritz H.-J."/>
        </authorList>
    </citation>
    <scope>NUCLEOTIDE SEQUENCE [LARGE SCALE GENOMIC DNA]</scope>
    <source>
        <strain>ATCC BAA-163 / DSM 7039 / HB27</strain>
    </source>
</reference>
<sequence>MPKKVLTGVVVSDKMQKTVTVLVERQFPHPLYGKVIKRSKKYLAHDPEEKYKLGDVVEIIESRPISKRKRFRVLRLVESGRMDLVEKYLIRRQNYQSLSKRGGKA</sequence>
<comment type="function">
    <text evidence="2">One of the primary rRNA binding proteins, it binds specifically to the 5'-end of 16S ribosomal RNA.</text>
</comment>
<comment type="subunit">
    <text evidence="2">Part of the 30S ribosomal subunit.</text>
</comment>
<comment type="similarity">
    <text evidence="2">Belongs to the universal ribosomal protein uS17 family.</text>
</comment>
<gene>
    <name evidence="2" type="primary">rpsQ</name>
    <name evidence="2" type="synonym">rps17</name>
    <name type="ordered locus">TT_C1319</name>
</gene>
<name>RS17_THET2</name>